<accession>A4FYL0</accession>
<dbReference type="EMBL" id="CP000609">
    <property type="protein sequence ID" value="ABO35294.1"/>
    <property type="molecule type" value="Genomic_DNA"/>
</dbReference>
<dbReference type="RefSeq" id="WP_011868747.1">
    <property type="nucleotide sequence ID" value="NC_009135.1"/>
</dbReference>
<dbReference type="SMR" id="A4FYL0"/>
<dbReference type="STRING" id="402880.MmarC5_0988"/>
<dbReference type="GeneID" id="4929101"/>
<dbReference type="KEGG" id="mmq:MmarC5_0988"/>
<dbReference type="eggNOG" id="arCOG00417">
    <property type="taxonomic scope" value="Archaea"/>
</dbReference>
<dbReference type="HOGENOM" id="CLU_041732_2_0_2"/>
<dbReference type="OrthoDB" id="17644at2157"/>
<dbReference type="Proteomes" id="UP000000253">
    <property type="component" value="Chromosome"/>
</dbReference>
<dbReference type="GO" id="GO:0005524">
    <property type="term" value="F:ATP binding"/>
    <property type="evidence" value="ECO:0007669"/>
    <property type="project" value="UniProtKB-UniRule"/>
</dbReference>
<dbReference type="GO" id="GO:0016887">
    <property type="term" value="F:ATP hydrolysis activity"/>
    <property type="evidence" value="ECO:0007669"/>
    <property type="project" value="InterPro"/>
</dbReference>
<dbReference type="GO" id="GO:0140664">
    <property type="term" value="F:ATP-dependent DNA damage sensor activity"/>
    <property type="evidence" value="ECO:0007669"/>
    <property type="project" value="InterPro"/>
</dbReference>
<dbReference type="GO" id="GO:0003684">
    <property type="term" value="F:damaged DNA binding"/>
    <property type="evidence" value="ECO:0007669"/>
    <property type="project" value="UniProtKB-UniRule"/>
</dbReference>
<dbReference type="GO" id="GO:0006310">
    <property type="term" value="P:DNA recombination"/>
    <property type="evidence" value="ECO:0007669"/>
    <property type="project" value="UniProtKB-UniRule"/>
</dbReference>
<dbReference type="GO" id="GO:0006281">
    <property type="term" value="P:DNA repair"/>
    <property type="evidence" value="ECO:0007669"/>
    <property type="project" value="UniProtKB-UniRule"/>
</dbReference>
<dbReference type="Gene3D" id="3.40.50.300">
    <property type="entry name" value="P-loop containing nucleotide triphosphate hydrolases"/>
    <property type="match status" value="1"/>
</dbReference>
<dbReference type="HAMAP" id="MF_00350">
    <property type="entry name" value="RadB"/>
    <property type="match status" value="1"/>
</dbReference>
<dbReference type="InterPro" id="IPR003593">
    <property type="entry name" value="AAA+_ATPase"/>
</dbReference>
<dbReference type="InterPro" id="IPR013632">
    <property type="entry name" value="DNA_recomb/repair_Rad51_C"/>
</dbReference>
<dbReference type="InterPro" id="IPR011939">
    <property type="entry name" value="DNA_repair_and_recomb_RadB"/>
</dbReference>
<dbReference type="InterPro" id="IPR027417">
    <property type="entry name" value="P-loop_NTPase"/>
</dbReference>
<dbReference type="InterPro" id="IPR020588">
    <property type="entry name" value="RecA_ATP-bd"/>
</dbReference>
<dbReference type="NCBIfam" id="TIGR02237">
    <property type="entry name" value="recomb_radB"/>
    <property type="match status" value="1"/>
</dbReference>
<dbReference type="PANTHER" id="PTHR22942:SF47">
    <property type="entry name" value="DNA REPAIR AND RECOMBINATION PROTEIN RADB"/>
    <property type="match status" value="1"/>
</dbReference>
<dbReference type="PANTHER" id="PTHR22942">
    <property type="entry name" value="RECA/RAD51/RADA DNA STRAND-PAIRING FAMILY MEMBER"/>
    <property type="match status" value="1"/>
</dbReference>
<dbReference type="Pfam" id="PF08423">
    <property type="entry name" value="Rad51"/>
    <property type="match status" value="1"/>
</dbReference>
<dbReference type="PIRSF" id="PIRSF003336">
    <property type="entry name" value="RadB"/>
    <property type="match status" value="1"/>
</dbReference>
<dbReference type="SMART" id="SM00382">
    <property type="entry name" value="AAA"/>
    <property type="match status" value="1"/>
</dbReference>
<dbReference type="SUPFAM" id="SSF52540">
    <property type="entry name" value="P-loop containing nucleoside triphosphate hydrolases"/>
    <property type="match status" value="1"/>
</dbReference>
<dbReference type="PROSITE" id="PS50162">
    <property type="entry name" value="RECA_2"/>
    <property type="match status" value="1"/>
</dbReference>
<keyword id="KW-0067">ATP-binding</keyword>
<keyword id="KW-0227">DNA damage</keyword>
<keyword id="KW-0233">DNA recombination</keyword>
<keyword id="KW-0238">DNA-binding</keyword>
<keyword id="KW-0547">Nucleotide-binding</keyword>
<organism>
    <name type="scientific">Methanococcus maripaludis (strain C5 / ATCC BAA-1333)</name>
    <dbReference type="NCBI Taxonomy" id="402880"/>
    <lineage>
        <taxon>Archaea</taxon>
        <taxon>Methanobacteriati</taxon>
        <taxon>Methanobacteriota</taxon>
        <taxon>Methanomada group</taxon>
        <taxon>Methanococci</taxon>
        <taxon>Methanococcales</taxon>
        <taxon>Methanococcaceae</taxon>
        <taxon>Methanococcus</taxon>
    </lineage>
</organism>
<gene>
    <name evidence="1" type="primary">radB</name>
    <name type="ordered locus">MmarC5_0988</name>
</gene>
<proteinExistence type="inferred from homology"/>
<evidence type="ECO:0000255" key="1">
    <source>
        <dbReference type="HAMAP-Rule" id="MF_00350"/>
    </source>
</evidence>
<sequence length="216" mass="24519">MLEELLNGNIEKKTITQIYGPPGVGKTNICILSMLKAIENGKNVVYIDTEGSLSIERIKQLSEQDSDELLKSIIIYEPSSFEEQSEALEKIFFLENIGLIVIDGIVSLYRLELCDNINENTKLNRMLGKQISNLLKVARMKNSGILITNQVKDSINGIEPAGGRLLEYWSKSIIKLEKTESIRKLTLEKHRHAKEGENLRFRIVQNGLEIINKSYQ</sequence>
<comment type="function">
    <text evidence="1">Involved in DNA repair and in homologous recombination. May regulate the cleavage reactions of the branch-structured DNA. Has a very weak ATPase activity that is not stimulated by DNA. Binds DNA but does not promote DNA strands exchange.</text>
</comment>
<comment type="similarity">
    <text evidence="1">Belongs to the eukaryotic RecA-like protein family. RadB subfamily.</text>
</comment>
<protein>
    <recommendedName>
        <fullName evidence="1">DNA repair and recombination protein RadB</fullName>
    </recommendedName>
</protein>
<name>RADB_METM5</name>
<reference key="1">
    <citation type="submission" date="2007-03" db="EMBL/GenBank/DDBJ databases">
        <title>Complete sequence of chromosome of Methanococcus maripaludis C5.</title>
        <authorList>
            <consortium name="US DOE Joint Genome Institute"/>
            <person name="Copeland A."/>
            <person name="Lucas S."/>
            <person name="Lapidus A."/>
            <person name="Barry K."/>
            <person name="Glavina del Rio T."/>
            <person name="Dalin E."/>
            <person name="Tice H."/>
            <person name="Pitluck S."/>
            <person name="Chertkov O."/>
            <person name="Brettin T."/>
            <person name="Bruce D."/>
            <person name="Han C."/>
            <person name="Detter J.C."/>
            <person name="Schmutz J."/>
            <person name="Larimer F."/>
            <person name="Land M."/>
            <person name="Hauser L."/>
            <person name="Kyrpides N."/>
            <person name="Mikhailova N."/>
            <person name="Sieprawska-Lupa M."/>
            <person name="Whitman W.B."/>
            <person name="Richardson P."/>
        </authorList>
    </citation>
    <scope>NUCLEOTIDE SEQUENCE [LARGE SCALE GENOMIC DNA]</scope>
    <source>
        <strain>C5 / ATCC BAA-1333</strain>
    </source>
</reference>
<feature type="chain" id="PRO_1000006932" description="DNA repair and recombination protein RadB">
    <location>
        <begin position="1"/>
        <end position="216"/>
    </location>
</feature>